<protein>
    <recommendedName>
        <fullName evidence="5">Type IV pilus subunit protein TapA</fullName>
    </recommendedName>
</protein>
<accession>P45791</accession>
<name>TAPA_AERHY</name>
<gene>
    <name type="primary">tapA</name>
</gene>
<organism>
    <name type="scientific">Aeromonas hydrophila</name>
    <dbReference type="NCBI Taxonomy" id="644"/>
    <lineage>
        <taxon>Bacteria</taxon>
        <taxon>Pseudomonadati</taxon>
        <taxon>Pseudomonadota</taxon>
        <taxon>Gammaproteobacteria</taxon>
        <taxon>Aeromonadales</taxon>
        <taxon>Aeromonadaceae</taxon>
        <taxon>Aeromonas</taxon>
    </lineage>
</organism>
<sequence>MKKQSGFTLIELMIVVAIVAILAAIALPAYQTYTKKAKFTEVVSATGTYKSALEVCFQTVGSLLNCTNGTNGVPPAAGASGLVTSVAVSGNTASAATITATGDATTFGATSNVYIMTAAGSNGQIIWTAPASGSTCAGAGFC</sequence>
<comment type="function">
    <text evidence="3 4">Major component of the type IV (TAP) pilus (PubMed:10858220). Aeromonas hydrophila possesses two distinct families of type IV pili: the bundle-forming pilus (Bfp) and the type IV pilus (Tap) (PubMed:9344785).</text>
</comment>
<comment type="subcellular location">
    <subcellularLocation>
        <location evidence="3">Membrane</location>
        <topology evidence="1">Single-pass membrane protein</topology>
    </subcellularLocation>
</comment>
<comment type="disruption phenotype">
    <text evidence="3">Mutants have no effect on the bacterial adherence to host epithelial and intestinal cell lines.</text>
</comment>
<comment type="similarity">
    <text evidence="6">Belongs to the N-Me-Phe pilin family.</text>
</comment>
<feature type="propeptide" id="PRO_0000024284" description="Leader sequence" evidence="2 7">
    <location>
        <begin position="1"/>
        <end position="6"/>
    </location>
</feature>
<feature type="chain" id="PRO_0000024285" description="Type IV pilus subunit protein TapA">
    <location>
        <begin position="7"/>
        <end position="142"/>
    </location>
</feature>
<feature type="transmembrane region" description="Helical" evidence="1">
    <location>
        <begin position="7"/>
        <end position="27"/>
    </location>
</feature>
<feature type="modified residue" description="N-methylphenylalanine" evidence="2">
    <location>
        <position position="7"/>
    </location>
</feature>
<keyword id="KW-1029">Fimbrium biogenesis</keyword>
<keyword id="KW-0472">Membrane</keyword>
<keyword id="KW-0488">Methylation</keyword>
<keyword id="KW-0812">Transmembrane</keyword>
<keyword id="KW-1133">Transmembrane helix</keyword>
<proteinExistence type="inferred from homology"/>
<evidence type="ECO:0000255" key="1"/>
<evidence type="ECO:0000255" key="2">
    <source>
        <dbReference type="PROSITE-ProRule" id="PRU01070"/>
    </source>
</evidence>
<evidence type="ECO:0000269" key="3">
    <source>
    </source>
</evidence>
<evidence type="ECO:0000269" key="4">
    <source>
    </source>
</evidence>
<evidence type="ECO:0000303" key="5">
    <source>
    </source>
</evidence>
<evidence type="ECO:0000305" key="6"/>
<evidence type="ECO:0000305" key="7">
    <source>
    </source>
</evidence>
<dbReference type="EMBL" id="U20255">
    <property type="protein sequence ID" value="AAC43995.1"/>
    <property type="molecule type" value="Genomic_DNA"/>
</dbReference>
<dbReference type="PIR" id="S70872">
    <property type="entry name" value="S70872"/>
</dbReference>
<dbReference type="SMR" id="P45791"/>
<dbReference type="GO" id="GO:0016020">
    <property type="term" value="C:membrane"/>
    <property type="evidence" value="ECO:0007669"/>
    <property type="project" value="UniProtKB-SubCell"/>
</dbReference>
<dbReference type="GO" id="GO:0044096">
    <property type="term" value="C:type IV pilus"/>
    <property type="evidence" value="ECO:0007669"/>
    <property type="project" value="TreeGrafter"/>
</dbReference>
<dbReference type="GO" id="GO:0007155">
    <property type="term" value="P:cell adhesion"/>
    <property type="evidence" value="ECO:0007669"/>
    <property type="project" value="InterPro"/>
</dbReference>
<dbReference type="GO" id="GO:0043107">
    <property type="term" value="P:type IV pilus-dependent motility"/>
    <property type="evidence" value="ECO:0007669"/>
    <property type="project" value="TreeGrafter"/>
</dbReference>
<dbReference type="Gene3D" id="3.30.700.10">
    <property type="entry name" value="Glycoprotein, Type 4 Pilin"/>
    <property type="match status" value="1"/>
</dbReference>
<dbReference type="InterPro" id="IPR012902">
    <property type="entry name" value="N_methyl_site"/>
</dbReference>
<dbReference type="InterPro" id="IPR001082">
    <property type="entry name" value="Pilin"/>
</dbReference>
<dbReference type="InterPro" id="IPR045584">
    <property type="entry name" value="Pilin-like"/>
</dbReference>
<dbReference type="InterPro" id="IPR050470">
    <property type="entry name" value="T4P/T2SS_Core"/>
</dbReference>
<dbReference type="NCBIfam" id="TIGR02532">
    <property type="entry name" value="IV_pilin_GFxxxE"/>
    <property type="match status" value="1"/>
</dbReference>
<dbReference type="PANTHER" id="PTHR30093">
    <property type="entry name" value="GENERAL SECRETION PATHWAY PROTEIN G"/>
    <property type="match status" value="1"/>
</dbReference>
<dbReference type="PANTHER" id="PTHR30093:SF34">
    <property type="entry name" value="PREPILIN PEPTIDASE-DEPENDENT PROTEIN D"/>
    <property type="match status" value="1"/>
</dbReference>
<dbReference type="Pfam" id="PF07963">
    <property type="entry name" value="N_methyl"/>
    <property type="match status" value="1"/>
</dbReference>
<dbReference type="Pfam" id="PF00114">
    <property type="entry name" value="Pilin"/>
    <property type="match status" value="1"/>
</dbReference>
<dbReference type="SUPFAM" id="SSF54523">
    <property type="entry name" value="Pili subunits"/>
    <property type="match status" value="1"/>
</dbReference>
<dbReference type="PROSITE" id="PS00409">
    <property type="entry name" value="PROKAR_NTER_METHYL"/>
    <property type="match status" value="1"/>
</dbReference>
<reference key="1">
    <citation type="journal article" date="1996" name="Mol. Microbiol.">
        <title>Cloning of an Aeromonas hydrophila type IV pilus biogenesis gene cluster: complementation of pilus assembly functions and characterization of a type IV leader peptidase/N-methyltransferase required for extracellular protein secretion.</title>
        <authorList>
            <person name="Pepe C.M."/>
            <person name="Eklund M.W."/>
            <person name="Strom M.S."/>
        </authorList>
    </citation>
    <scope>NUCLEOTIDE SEQUENCE [GENOMIC DNA]</scope>
    <source>
        <strain>Ah65</strain>
    </source>
</reference>
<reference key="2">
    <citation type="journal article" date="1997" name="Microb. Pathog.">
        <title>Aeromonas spp. possess at least two distinct type IV pilus families.</title>
        <authorList>
            <person name="Barnett T.C."/>
            <person name="Kirov S.M."/>
            <person name="Strom M.S."/>
            <person name="Sanderson K."/>
        </authorList>
    </citation>
    <scope>FUNCTION</scope>
</reference>
<reference key="3">
    <citation type="journal article" date="2000" name="Infect. Immun.">
        <title>Investigation of the role of type IV Aeromonas pilus (Tap) in the pathogenesis of Aeromonas gastrointestinal infection.</title>
        <authorList>
            <person name="Kirov S.M."/>
            <person name="Barnett T.C."/>
            <person name="Pepe C.M."/>
            <person name="Strom M.S."/>
            <person name="Albert M.J."/>
        </authorList>
    </citation>
    <scope>FUNCTION</scope>
    <scope>DISRUPTION PHENOTYPE</scope>
    <scope>SUBCELLULAR LOCATION</scope>
    <source>
        <strain>Ah65N</strain>
    </source>
</reference>